<name>RL10_PSEPW</name>
<proteinExistence type="inferred from homology"/>
<evidence type="ECO:0000255" key="1">
    <source>
        <dbReference type="HAMAP-Rule" id="MF_00362"/>
    </source>
</evidence>
<evidence type="ECO:0000305" key="2"/>
<organism>
    <name type="scientific">Pseudomonas putida (strain W619)</name>
    <dbReference type="NCBI Taxonomy" id="390235"/>
    <lineage>
        <taxon>Bacteria</taxon>
        <taxon>Pseudomonadati</taxon>
        <taxon>Pseudomonadota</taxon>
        <taxon>Gammaproteobacteria</taxon>
        <taxon>Pseudomonadales</taxon>
        <taxon>Pseudomonadaceae</taxon>
        <taxon>Pseudomonas</taxon>
    </lineage>
</organism>
<keyword id="KW-0687">Ribonucleoprotein</keyword>
<keyword id="KW-0689">Ribosomal protein</keyword>
<keyword id="KW-0694">RNA-binding</keyword>
<keyword id="KW-0699">rRNA-binding</keyword>
<gene>
    <name evidence="1" type="primary">rplJ</name>
    <name type="ordered locus">PputW619_4758</name>
</gene>
<feature type="chain" id="PRO_1000121000" description="Large ribosomal subunit protein uL10">
    <location>
        <begin position="1"/>
        <end position="166"/>
    </location>
</feature>
<accession>B1JDX3</accession>
<protein>
    <recommendedName>
        <fullName evidence="1">Large ribosomal subunit protein uL10</fullName>
    </recommendedName>
    <alternativeName>
        <fullName evidence="2">50S ribosomal protein L10</fullName>
    </alternativeName>
</protein>
<sequence>MAIKLEDKKAIVAEVNEAAKVALSAVVADARGVTVSAMTGLRKEAREAGVYVRVVRNTLLKRAVEGTEYSILNDAFKGPTLIAFSNEHPGAAARLFKEFAKGQDKFEIKAAAFDGNFIAANQIDVLATLPTRDEAIARLMSVIQGATSKLARTLAAVRDQKEAAAA</sequence>
<dbReference type="EMBL" id="CP000949">
    <property type="protein sequence ID" value="ACA75234.1"/>
    <property type="molecule type" value="Genomic_DNA"/>
</dbReference>
<dbReference type="STRING" id="390235.PputW619_4758"/>
<dbReference type="KEGG" id="ppw:PputW619_4758"/>
<dbReference type="eggNOG" id="COG0244">
    <property type="taxonomic scope" value="Bacteria"/>
</dbReference>
<dbReference type="HOGENOM" id="CLU_092227_0_2_6"/>
<dbReference type="OrthoDB" id="9808307at2"/>
<dbReference type="GO" id="GO:0015934">
    <property type="term" value="C:large ribosomal subunit"/>
    <property type="evidence" value="ECO:0007669"/>
    <property type="project" value="InterPro"/>
</dbReference>
<dbReference type="GO" id="GO:0070180">
    <property type="term" value="F:large ribosomal subunit rRNA binding"/>
    <property type="evidence" value="ECO:0007669"/>
    <property type="project" value="UniProtKB-UniRule"/>
</dbReference>
<dbReference type="GO" id="GO:0003735">
    <property type="term" value="F:structural constituent of ribosome"/>
    <property type="evidence" value="ECO:0007669"/>
    <property type="project" value="InterPro"/>
</dbReference>
<dbReference type="GO" id="GO:0006412">
    <property type="term" value="P:translation"/>
    <property type="evidence" value="ECO:0007669"/>
    <property type="project" value="UniProtKB-UniRule"/>
</dbReference>
<dbReference type="CDD" id="cd05797">
    <property type="entry name" value="Ribosomal_L10"/>
    <property type="match status" value="1"/>
</dbReference>
<dbReference type="FunFam" id="3.30.70.1730:FF:000001">
    <property type="entry name" value="50S ribosomal protein L10"/>
    <property type="match status" value="1"/>
</dbReference>
<dbReference type="Gene3D" id="3.30.70.1730">
    <property type="match status" value="1"/>
</dbReference>
<dbReference type="Gene3D" id="6.10.250.2350">
    <property type="match status" value="1"/>
</dbReference>
<dbReference type="HAMAP" id="MF_00362">
    <property type="entry name" value="Ribosomal_uL10"/>
    <property type="match status" value="1"/>
</dbReference>
<dbReference type="InterPro" id="IPR001790">
    <property type="entry name" value="Ribosomal_uL10"/>
</dbReference>
<dbReference type="InterPro" id="IPR043141">
    <property type="entry name" value="Ribosomal_uL10-like_sf"/>
</dbReference>
<dbReference type="InterPro" id="IPR022973">
    <property type="entry name" value="Ribosomal_uL10_bac"/>
</dbReference>
<dbReference type="InterPro" id="IPR047865">
    <property type="entry name" value="Ribosomal_uL10_bac_type"/>
</dbReference>
<dbReference type="InterPro" id="IPR002363">
    <property type="entry name" value="Ribosomal_uL10_CS_bac"/>
</dbReference>
<dbReference type="NCBIfam" id="NF000955">
    <property type="entry name" value="PRK00099.1-1"/>
    <property type="match status" value="1"/>
</dbReference>
<dbReference type="PANTHER" id="PTHR11560">
    <property type="entry name" value="39S RIBOSOMAL PROTEIN L10, MITOCHONDRIAL"/>
    <property type="match status" value="1"/>
</dbReference>
<dbReference type="Pfam" id="PF00466">
    <property type="entry name" value="Ribosomal_L10"/>
    <property type="match status" value="1"/>
</dbReference>
<dbReference type="SUPFAM" id="SSF160369">
    <property type="entry name" value="Ribosomal protein L10-like"/>
    <property type="match status" value="1"/>
</dbReference>
<dbReference type="PROSITE" id="PS01109">
    <property type="entry name" value="RIBOSOMAL_L10"/>
    <property type="match status" value="1"/>
</dbReference>
<comment type="function">
    <text evidence="1">Forms part of the ribosomal stalk, playing a central role in the interaction of the ribosome with GTP-bound translation factors.</text>
</comment>
<comment type="subunit">
    <text evidence="1">Part of the ribosomal stalk of the 50S ribosomal subunit. The N-terminus interacts with L11 and the large rRNA to form the base of the stalk. The C-terminus forms an elongated spine to which L12 dimers bind in a sequential fashion forming a multimeric L10(L12)X complex.</text>
</comment>
<comment type="similarity">
    <text evidence="1">Belongs to the universal ribosomal protein uL10 family.</text>
</comment>
<reference key="1">
    <citation type="submission" date="2008-02" db="EMBL/GenBank/DDBJ databases">
        <title>Complete sequence of Pseudomonas putida W619.</title>
        <authorList>
            <person name="Copeland A."/>
            <person name="Lucas S."/>
            <person name="Lapidus A."/>
            <person name="Barry K."/>
            <person name="Detter J.C."/>
            <person name="Glavina del Rio T."/>
            <person name="Dalin E."/>
            <person name="Tice H."/>
            <person name="Pitluck S."/>
            <person name="Chain P."/>
            <person name="Malfatti S."/>
            <person name="Shin M."/>
            <person name="Vergez L."/>
            <person name="Schmutz J."/>
            <person name="Larimer F."/>
            <person name="Land M."/>
            <person name="Hauser L."/>
            <person name="Kyrpides N."/>
            <person name="Kim E."/>
            <person name="Taghavi S."/>
            <person name="Vangronsveld D."/>
            <person name="van der Lelie D."/>
            <person name="Richardson P."/>
        </authorList>
    </citation>
    <scope>NUCLEOTIDE SEQUENCE [LARGE SCALE GENOMIC DNA]</scope>
    <source>
        <strain>W619</strain>
    </source>
</reference>